<comment type="function">
    <text evidence="1">Histone-like DNA-binding protein which is capable of wrapping DNA to stabilize it, and thus to prevent its denaturation under extreme environmental conditions.</text>
</comment>
<comment type="similarity">
    <text evidence="2">Belongs to the bacterial histone-like protein family.</text>
</comment>
<comment type="sequence caution" evidence="2">
    <conflict type="frameshift">
        <sequence resource="EMBL-CDS" id="AAC05204"/>
    </conflict>
</comment>
<sequence>MITKNYLIDKIHDKLNYLSKEDVKDSVDLILDYLNESLKQQKRIEIRNFGNFSIRKRKFPESEKFYNTVYYRMPKNLFKE</sequence>
<accession>O68451</accession>
<accession>A8GSD2</accession>
<reference key="1">
    <citation type="submission" date="1998-01" db="EMBL/GenBank/DDBJ databases">
        <title>Rickettsia rickettsii fragment which imparts hemolysis upon E. coli.</title>
        <authorList>
            <person name="Temenak J.J."/>
        </authorList>
    </citation>
    <scope>NUCLEOTIDE SEQUENCE [GENOMIC DNA]</scope>
</reference>
<reference key="2">
    <citation type="submission" date="2007-09" db="EMBL/GenBank/DDBJ databases">
        <title>Complete genome sequence of Rickettsia rickettsii.</title>
        <authorList>
            <person name="Madan A."/>
            <person name="Fahey J."/>
            <person name="Helton E."/>
            <person name="Ketteman M."/>
            <person name="Madan A."/>
            <person name="Rodrigues S."/>
            <person name="Sanchez A."/>
            <person name="Dasch G."/>
            <person name="Eremeeva M."/>
        </authorList>
    </citation>
    <scope>NUCLEOTIDE SEQUENCE [LARGE SCALE GENOMIC DNA]</scope>
    <source>
        <strain>Sheila Smith</strain>
    </source>
</reference>
<name>DBHL_RICRS</name>
<keyword id="KW-0226">DNA condensation</keyword>
<keyword id="KW-0238">DNA-binding</keyword>
<gene>
    <name type="ordered locus">A1G_03965</name>
</gene>
<feature type="chain" id="PRO_0000104967" description="DNA-binding protein HU-like">
    <location>
        <begin position="1"/>
        <end position="80"/>
    </location>
</feature>
<proteinExistence type="inferred from homology"/>
<protein>
    <recommendedName>
        <fullName>DNA-binding protein HU-like</fullName>
    </recommendedName>
</protein>
<dbReference type="EMBL" id="AF042063">
    <property type="protein sequence ID" value="AAC05204.1"/>
    <property type="status" value="ALT_FRAME"/>
    <property type="molecule type" value="Genomic_DNA"/>
</dbReference>
<dbReference type="EMBL" id="CP000848">
    <property type="protein sequence ID" value="ABV76307.1"/>
    <property type="molecule type" value="Genomic_DNA"/>
</dbReference>
<dbReference type="RefSeq" id="WP_012150884.1">
    <property type="nucleotide sequence ID" value="NZ_CP121767.1"/>
</dbReference>
<dbReference type="SMR" id="O68451"/>
<dbReference type="GeneID" id="79937429"/>
<dbReference type="KEGG" id="rri:A1G_03965"/>
<dbReference type="HOGENOM" id="CLU_2467017_0_0_5"/>
<dbReference type="Proteomes" id="UP000006832">
    <property type="component" value="Chromosome"/>
</dbReference>
<dbReference type="GO" id="GO:0005829">
    <property type="term" value="C:cytosol"/>
    <property type="evidence" value="ECO:0007669"/>
    <property type="project" value="TreeGrafter"/>
</dbReference>
<dbReference type="GO" id="GO:0003677">
    <property type="term" value="F:DNA binding"/>
    <property type="evidence" value="ECO:0007669"/>
    <property type="project" value="UniProtKB-KW"/>
</dbReference>
<dbReference type="GO" id="GO:0030527">
    <property type="term" value="F:structural constituent of chromatin"/>
    <property type="evidence" value="ECO:0007669"/>
    <property type="project" value="InterPro"/>
</dbReference>
<dbReference type="GO" id="GO:0030261">
    <property type="term" value="P:chromosome condensation"/>
    <property type="evidence" value="ECO:0007669"/>
    <property type="project" value="UniProtKB-KW"/>
</dbReference>
<dbReference type="Gene3D" id="4.10.520.10">
    <property type="entry name" value="IHF-like DNA-binding proteins"/>
    <property type="match status" value="1"/>
</dbReference>
<dbReference type="InterPro" id="IPR000119">
    <property type="entry name" value="Hist_DNA-bd"/>
</dbReference>
<dbReference type="InterPro" id="IPR010992">
    <property type="entry name" value="IHF-like_DNA-bd_dom_sf"/>
</dbReference>
<dbReference type="PANTHER" id="PTHR33175">
    <property type="entry name" value="DNA-BINDING PROTEIN HU"/>
    <property type="match status" value="1"/>
</dbReference>
<dbReference type="PANTHER" id="PTHR33175:SF3">
    <property type="entry name" value="DNA-BINDING PROTEIN HU-BETA"/>
    <property type="match status" value="1"/>
</dbReference>
<dbReference type="Pfam" id="PF00216">
    <property type="entry name" value="Bac_DNA_binding"/>
    <property type="match status" value="1"/>
</dbReference>
<dbReference type="SMART" id="SM00411">
    <property type="entry name" value="BHL"/>
    <property type="match status" value="1"/>
</dbReference>
<dbReference type="SUPFAM" id="SSF47729">
    <property type="entry name" value="IHF-like DNA-binding proteins"/>
    <property type="match status" value="1"/>
</dbReference>
<organism>
    <name type="scientific">Rickettsia rickettsii (strain Sheila Smith)</name>
    <dbReference type="NCBI Taxonomy" id="392021"/>
    <lineage>
        <taxon>Bacteria</taxon>
        <taxon>Pseudomonadati</taxon>
        <taxon>Pseudomonadota</taxon>
        <taxon>Alphaproteobacteria</taxon>
        <taxon>Rickettsiales</taxon>
        <taxon>Rickettsiaceae</taxon>
        <taxon>Rickettsieae</taxon>
        <taxon>Rickettsia</taxon>
        <taxon>spotted fever group</taxon>
    </lineage>
</organism>
<evidence type="ECO:0000250" key="1"/>
<evidence type="ECO:0000305" key="2"/>